<proteinExistence type="evidence at transcript level"/>
<dbReference type="EMBL" id="BC112855">
    <property type="protein sequence ID" value="AAI12856.1"/>
    <property type="molecule type" value="mRNA"/>
</dbReference>
<dbReference type="RefSeq" id="NP_001039743.1">
    <property type="nucleotide sequence ID" value="NM_001046278.3"/>
</dbReference>
<dbReference type="RefSeq" id="XP_010808250.1">
    <property type="nucleotide sequence ID" value="XM_010809948.2"/>
</dbReference>
<dbReference type="RefSeq" id="XP_010808251.1">
    <property type="nucleotide sequence ID" value="XM_010809949.2"/>
</dbReference>
<dbReference type="RefSeq" id="XP_024854522.1">
    <property type="nucleotide sequence ID" value="XM_024998754.2"/>
</dbReference>
<dbReference type="SMR" id="Q2KHW8"/>
<dbReference type="FunCoup" id="Q2KHW8">
    <property type="interactions" value="2597"/>
</dbReference>
<dbReference type="STRING" id="9913.ENSBTAP00000020624"/>
<dbReference type="PaxDb" id="9913-ENSBTAP00000020624"/>
<dbReference type="GeneID" id="525263"/>
<dbReference type="KEGG" id="bta:525263"/>
<dbReference type="CTD" id="79833"/>
<dbReference type="VEuPathDB" id="HostDB:ENSBTAG00000015521"/>
<dbReference type="eggNOG" id="ENOG502RZTW">
    <property type="taxonomic scope" value="Eukaryota"/>
</dbReference>
<dbReference type="HOGENOM" id="CLU_127294_0_0_1"/>
<dbReference type="InParanoid" id="Q2KHW8"/>
<dbReference type="OMA" id="LEWEDYV"/>
<dbReference type="OrthoDB" id="43460at2759"/>
<dbReference type="TreeFam" id="TF314693"/>
<dbReference type="Reactome" id="R-BTA-191859">
    <property type="pathway name" value="snRNP Assembly"/>
</dbReference>
<dbReference type="Proteomes" id="UP000009136">
    <property type="component" value="Chromosome 11"/>
</dbReference>
<dbReference type="GO" id="GO:0005829">
    <property type="term" value="C:cytosol"/>
    <property type="evidence" value="ECO:0000250"/>
    <property type="project" value="UniProtKB"/>
</dbReference>
<dbReference type="GO" id="GO:0097504">
    <property type="term" value="C:Gemini of Cajal bodies"/>
    <property type="evidence" value="ECO:0000250"/>
    <property type="project" value="UniProtKB"/>
</dbReference>
<dbReference type="GO" id="GO:0032797">
    <property type="term" value="C:SMN complex"/>
    <property type="evidence" value="ECO:0000250"/>
    <property type="project" value="UniProtKB"/>
</dbReference>
<dbReference type="GO" id="GO:0034719">
    <property type="term" value="C:SMN-Sm protein complex"/>
    <property type="evidence" value="ECO:0000250"/>
    <property type="project" value="UniProtKB"/>
</dbReference>
<dbReference type="GO" id="GO:0003723">
    <property type="term" value="F:RNA binding"/>
    <property type="evidence" value="ECO:0007669"/>
    <property type="project" value="InterPro"/>
</dbReference>
<dbReference type="GO" id="GO:0000245">
    <property type="term" value="P:spliceosomal complex assembly"/>
    <property type="evidence" value="ECO:0007669"/>
    <property type="project" value="InterPro"/>
</dbReference>
<dbReference type="GO" id="GO:0000387">
    <property type="term" value="P:spliceosomal snRNP assembly"/>
    <property type="evidence" value="ECO:0000250"/>
    <property type="project" value="UniProtKB"/>
</dbReference>
<dbReference type="CDD" id="cd11676">
    <property type="entry name" value="Gemin6"/>
    <property type="match status" value="1"/>
</dbReference>
<dbReference type="FunFam" id="2.30.30.100:FF:000038">
    <property type="entry name" value="Gem-associated protein 6"/>
    <property type="match status" value="1"/>
</dbReference>
<dbReference type="Gene3D" id="2.30.30.100">
    <property type="match status" value="1"/>
</dbReference>
<dbReference type="InterPro" id="IPR047574">
    <property type="entry name" value="AD"/>
</dbReference>
<dbReference type="InterPro" id="IPR009422">
    <property type="entry name" value="Gemin6"/>
</dbReference>
<dbReference type="InterPro" id="IPR046856">
    <property type="entry name" value="Gemin6_C"/>
</dbReference>
<dbReference type="InterPro" id="IPR046857">
    <property type="entry name" value="Gemin6_Sm-like_dom"/>
</dbReference>
<dbReference type="InterPro" id="IPR047575">
    <property type="entry name" value="Sm"/>
</dbReference>
<dbReference type="PANTHER" id="PTHR14710">
    <property type="entry name" value="GEM-ASSOCIATED PROTEIN 6"/>
    <property type="match status" value="1"/>
</dbReference>
<dbReference type="PANTHER" id="PTHR14710:SF2">
    <property type="entry name" value="GEM-ASSOCIATED PROTEIN 6"/>
    <property type="match status" value="1"/>
</dbReference>
<dbReference type="Pfam" id="PF06372">
    <property type="entry name" value="Gemin6"/>
    <property type="match status" value="1"/>
</dbReference>
<dbReference type="Pfam" id="PF20417">
    <property type="entry name" value="Gemin6_C"/>
    <property type="match status" value="1"/>
</dbReference>
<dbReference type="PROSITE" id="PS52001">
    <property type="entry name" value="AD"/>
    <property type="match status" value="1"/>
</dbReference>
<dbReference type="PROSITE" id="PS52002">
    <property type="entry name" value="SM"/>
    <property type="match status" value="1"/>
</dbReference>
<name>GEMI6_BOVIN</name>
<comment type="function">
    <text evidence="2">The SMN complex catalyzes the assembly of small nuclear ribonucleoproteins (snRNPs), the building blocks of the spliceosome, and thereby plays an important role in the splicing of cellular pre-mRNAs. Most spliceosomal snRNPs contain a common set of Sm proteins SNRPB, SNRPD1, SNRPD2, SNRPD3, SNRPE, SNRPF and SNRPG that assemble in a heptameric protein ring on the Sm site of the small nuclear RNA to form the core snRNP (Sm core). In the cytosol, the Sm proteins SNRPD1, SNRPD2, SNRPE, SNRPF and SNRPG are trapped in an inactive 6S pICln-Sm complex by the chaperone CLNS1A that controls the assembly of the core snRNP. To assemble core snRNPs, the SMN complex accepts the trapped 5Sm proteins from CLNS1A forming an intermediate. Binding of snRNA inside 5Sm triggers eviction of the SMN complex, thereby allowing binding of SNRPD3 and SNRPB to complete assembly of the core snRNP (By similarity).</text>
</comment>
<comment type="subunit">
    <text evidence="2">Part of the core SMN complex that contains SMN1, GEMIN2/SIP1, DDX20/GEMIN3, GEMIN4, GEMIN5, GEMIN6, GEMIN7, GEMIN8 and STRAP/UNRIP. Part of the SMN-Sm complex that contains SMN1, GEMIN2/SIP1, DDX20/GEMIN3, GEMIN4, GEMIN5, GEMIN6, GEMIN7, GEMIN8, STRAP/UNRIP and the Sm proteins SNRPB, SNRPD1, SNRPD2, SNRPD3, SNRPE, SNRPF and SNRPG. Interacts with GEMIN7; the interaction is direct. Interacts with GEMIN8; the interaction is direct. Interacts with SNRPB, SNRPD2, SNRPD3 and SNRPE; the interaction is direct.</text>
</comment>
<comment type="subcellular location">
    <subcellularLocation>
        <location evidence="2">Nucleus</location>
        <location evidence="2">Nucleoplasm</location>
    </subcellularLocation>
    <subcellularLocation>
        <location evidence="2">Nucleus</location>
        <location evidence="2">Gem</location>
    </subcellularLocation>
    <subcellularLocation>
        <location evidence="2">Cytoplasm</location>
    </subcellularLocation>
    <text evidence="1">Found both in the nucleoplasm and in nuclear bodies called gems (Gemini of Cajal bodies) that are often in proximity to Cajal (coiled) bodies. Also found in the cytoplasm (By similarity).</text>
</comment>
<feature type="chain" id="PRO_0000244456" description="Gem-associated protein 6">
    <location>
        <begin position="1"/>
        <end position="166"/>
    </location>
</feature>
<feature type="domain" description="Sm" evidence="4">
    <location>
        <begin position="4"/>
        <end position="73"/>
    </location>
</feature>
<feature type="domain" description="AD" evidence="3">
    <location>
        <begin position="68"/>
        <end position="166"/>
    </location>
</feature>
<feature type="modified residue" description="Phosphoserine" evidence="2">
    <location>
        <position position="94"/>
    </location>
</feature>
<feature type="modified residue" description="Phosphoserine" evidence="2">
    <location>
        <position position="165"/>
    </location>
</feature>
<gene>
    <name type="primary">GEMIN6</name>
</gene>
<organism>
    <name type="scientific">Bos taurus</name>
    <name type="common">Bovine</name>
    <dbReference type="NCBI Taxonomy" id="9913"/>
    <lineage>
        <taxon>Eukaryota</taxon>
        <taxon>Metazoa</taxon>
        <taxon>Chordata</taxon>
        <taxon>Craniata</taxon>
        <taxon>Vertebrata</taxon>
        <taxon>Euteleostomi</taxon>
        <taxon>Mammalia</taxon>
        <taxon>Eutheria</taxon>
        <taxon>Laurasiatheria</taxon>
        <taxon>Artiodactyla</taxon>
        <taxon>Ruminantia</taxon>
        <taxon>Pecora</taxon>
        <taxon>Bovidae</taxon>
        <taxon>Bovinae</taxon>
        <taxon>Bos</taxon>
    </lineage>
</organism>
<evidence type="ECO:0000250" key="1"/>
<evidence type="ECO:0000250" key="2">
    <source>
        <dbReference type="UniProtKB" id="Q8WXD5"/>
    </source>
</evidence>
<evidence type="ECO:0000255" key="3">
    <source>
        <dbReference type="PROSITE-ProRule" id="PRU01345"/>
    </source>
</evidence>
<evidence type="ECO:0000255" key="4">
    <source>
        <dbReference type="PROSITE-ProRule" id="PRU01346"/>
    </source>
</evidence>
<keyword id="KW-0963">Cytoplasm</keyword>
<keyword id="KW-0507">mRNA processing</keyword>
<keyword id="KW-0508">mRNA splicing</keyword>
<keyword id="KW-0539">Nucleus</keyword>
<keyword id="KW-0597">Phosphoprotein</keyword>
<keyword id="KW-1185">Reference proteome</keyword>
<sequence>MNEWMKKGPLEWQDYTYKAVSVTASDKEYKGWVLTTDPVSANIVLVNFLEDGSMSVTGIMGHAVQTVEIVNEGDHSVREKLMHLFMSGDCKAYSPEDLEKRKNSLKKWLEKNHIPITEQRDSRKTLCVAGVLTIDPPYGPENCNSSNEIILSRVQDLIQGHLEASQ</sequence>
<accession>Q2KHW8</accession>
<protein>
    <recommendedName>
        <fullName>Gem-associated protein 6</fullName>
        <shortName>Gemin-6</shortName>
    </recommendedName>
</protein>
<reference key="1">
    <citation type="submission" date="2006-01" db="EMBL/GenBank/DDBJ databases">
        <authorList>
            <consortium name="NIH - Mammalian Gene Collection (MGC) project"/>
        </authorList>
    </citation>
    <scope>NUCLEOTIDE SEQUENCE [LARGE SCALE MRNA]</scope>
    <source>
        <strain>Hereford</strain>
        <tissue>Hypothalamus</tissue>
    </source>
</reference>